<comment type="function">
    <text evidence="1">Catalyzes the irreversible transfer of a propylamine group from the amino donor S-adenosylmethioninamine (decarboxy-AdoMet) to putrescine (1,4-diaminobutane) to yield spermidine.</text>
</comment>
<comment type="catalytic activity">
    <reaction evidence="1">
        <text>S-adenosyl 3-(methylsulfanyl)propylamine + putrescine = S-methyl-5'-thioadenosine + spermidine + H(+)</text>
        <dbReference type="Rhea" id="RHEA:12721"/>
        <dbReference type="ChEBI" id="CHEBI:15378"/>
        <dbReference type="ChEBI" id="CHEBI:17509"/>
        <dbReference type="ChEBI" id="CHEBI:57443"/>
        <dbReference type="ChEBI" id="CHEBI:57834"/>
        <dbReference type="ChEBI" id="CHEBI:326268"/>
        <dbReference type="EC" id="2.5.1.16"/>
    </reaction>
</comment>
<comment type="pathway">
    <text evidence="1">Amine and polyamine biosynthesis; spermidine biosynthesis; spermidine from putrescine: step 1/1.</text>
</comment>
<comment type="subunit">
    <text evidence="1">Homodimer or homotetramer.</text>
</comment>
<comment type="subcellular location">
    <subcellularLocation>
        <location evidence="1">Cytoplasm</location>
    </subcellularLocation>
</comment>
<comment type="similarity">
    <text evidence="1">Belongs to the spermidine/spermine synthase family.</text>
</comment>
<sequence length="283" mass="32993">MELWYTEEHTDKVRFSIKVDEQLYSGKSDFQRIDVFKSQEFGTFFTLDGLMMVTEKDEFIYHDMIVHVPMATNPNIKNVLVIGAGDGGTVRELTRYETIEKIDMVEIDKLVVDVCREYLPQTANKLDDPRVSLFFEDGLKFVRSVENKYDLIIVDSTDPFGPGEGLFTREFYGNCFKALKEDGILVNQHESPYYEEYARGMKRAHKRIKECFPVCRVYQAHIPTYPSGHWLFGFASKKYDPLNADIEKWNDLGLKTKYYNTDLHKGCFALPNYVKEMLENVDE</sequence>
<name>SPEE_CLOPE</name>
<organism>
    <name type="scientific">Clostridium perfringens (strain 13 / Type A)</name>
    <dbReference type="NCBI Taxonomy" id="195102"/>
    <lineage>
        <taxon>Bacteria</taxon>
        <taxon>Bacillati</taxon>
        <taxon>Bacillota</taxon>
        <taxon>Clostridia</taxon>
        <taxon>Eubacteriales</taxon>
        <taxon>Clostridiaceae</taxon>
        <taxon>Clostridium</taxon>
    </lineage>
</organism>
<keyword id="KW-0963">Cytoplasm</keyword>
<keyword id="KW-0620">Polyamine biosynthesis</keyword>
<keyword id="KW-1185">Reference proteome</keyword>
<keyword id="KW-0745">Spermidine biosynthesis</keyword>
<keyword id="KW-0808">Transferase</keyword>
<protein>
    <recommendedName>
        <fullName evidence="1">Polyamine aminopropyltransferase</fullName>
    </recommendedName>
    <alternativeName>
        <fullName evidence="1">Putrescine aminopropyltransferase</fullName>
        <shortName evidence="1">PAPT</shortName>
    </alternativeName>
    <alternativeName>
        <fullName evidence="1">Spermidine synthase</fullName>
        <shortName evidence="1">SPDS</shortName>
        <shortName evidence="1">SPDSY</shortName>
        <ecNumber evidence="1">2.5.1.16</ecNumber>
    </alternativeName>
</protein>
<feature type="chain" id="PRO_0000156476" description="Polyamine aminopropyltransferase">
    <location>
        <begin position="1"/>
        <end position="283"/>
    </location>
</feature>
<feature type="domain" description="PABS" evidence="1">
    <location>
        <begin position="2"/>
        <end position="237"/>
    </location>
</feature>
<feature type="active site" description="Proton acceptor" evidence="1">
    <location>
        <position position="155"/>
    </location>
</feature>
<feature type="binding site" evidence="1">
    <location>
        <position position="31"/>
    </location>
    <ligand>
        <name>S-methyl-5'-thioadenosine</name>
        <dbReference type="ChEBI" id="CHEBI:17509"/>
    </ligand>
</feature>
<feature type="binding site" evidence="1">
    <location>
        <position position="62"/>
    </location>
    <ligand>
        <name>spermidine</name>
        <dbReference type="ChEBI" id="CHEBI:57834"/>
    </ligand>
</feature>
<feature type="binding site" evidence="1">
    <location>
        <position position="86"/>
    </location>
    <ligand>
        <name>spermidine</name>
        <dbReference type="ChEBI" id="CHEBI:57834"/>
    </ligand>
</feature>
<feature type="binding site" evidence="1">
    <location>
        <position position="106"/>
    </location>
    <ligand>
        <name>S-methyl-5'-thioadenosine</name>
        <dbReference type="ChEBI" id="CHEBI:17509"/>
    </ligand>
</feature>
<feature type="binding site" evidence="1">
    <location>
        <begin position="137"/>
        <end position="138"/>
    </location>
    <ligand>
        <name>S-methyl-5'-thioadenosine</name>
        <dbReference type="ChEBI" id="CHEBI:17509"/>
    </ligand>
</feature>
<feature type="binding site" evidence="1">
    <location>
        <begin position="155"/>
        <end position="158"/>
    </location>
    <ligand>
        <name>spermidine</name>
        <dbReference type="ChEBI" id="CHEBI:57834"/>
    </ligand>
</feature>
<feature type="binding site" evidence="1">
    <location>
        <position position="162"/>
    </location>
    <ligand>
        <name>S-methyl-5'-thioadenosine</name>
        <dbReference type="ChEBI" id="CHEBI:17509"/>
    </ligand>
</feature>
<proteinExistence type="inferred from homology"/>
<dbReference type="EC" id="2.5.1.16" evidence="1"/>
<dbReference type="EMBL" id="BA000016">
    <property type="protein sequence ID" value="BAB80256.1"/>
    <property type="molecule type" value="Genomic_DNA"/>
</dbReference>
<dbReference type="RefSeq" id="WP_003449853.1">
    <property type="nucleotide sequence ID" value="NC_003366.1"/>
</dbReference>
<dbReference type="SMR" id="Q8XMY8"/>
<dbReference type="STRING" id="195102.gene:10489807"/>
<dbReference type="KEGG" id="cpe:CPE0550"/>
<dbReference type="HOGENOM" id="CLU_048199_0_0_9"/>
<dbReference type="UniPathway" id="UPA00248">
    <property type="reaction ID" value="UER00314"/>
</dbReference>
<dbReference type="Proteomes" id="UP000000818">
    <property type="component" value="Chromosome"/>
</dbReference>
<dbReference type="GO" id="GO:0005829">
    <property type="term" value="C:cytosol"/>
    <property type="evidence" value="ECO:0007669"/>
    <property type="project" value="TreeGrafter"/>
</dbReference>
<dbReference type="GO" id="GO:0004766">
    <property type="term" value="F:spermidine synthase activity"/>
    <property type="evidence" value="ECO:0007669"/>
    <property type="project" value="UniProtKB-UniRule"/>
</dbReference>
<dbReference type="GO" id="GO:0008295">
    <property type="term" value="P:spermidine biosynthetic process"/>
    <property type="evidence" value="ECO:0007669"/>
    <property type="project" value="UniProtKB-UniRule"/>
</dbReference>
<dbReference type="CDD" id="cd02440">
    <property type="entry name" value="AdoMet_MTases"/>
    <property type="match status" value="1"/>
</dbReference>
<dbReference type="Gene3D" id="2.30.140.10">
    <property type="entry name" value="Spermidine synthase, tetramerisation domain"/>
    <property type="match status" value="1"/>
</dbReference>
<dbReference type="Gene3D" id="3.40.50.150">
    <property type="entry name" value="Vaccinia Virus protein VP39"/>
    <property type="match status" value="1"/>
</dbReference>
<dbReference type="HAMAP" id="MF_00198">
    <property type="entry name" value="Spermidine_synth"/>
    <property type="match status" value="1"/>
</dbReference>
<dbReference type="InterPro" id="IPR030374">
    <property type="entry name" value="PABS"/>
</dbReference>
<dbReference type="InterPro" id="IPR029063">
    <property type="entry name" value="SAM-dependent_MTases_sf"/>
</dbReference>
<dbReference type="InterPro" id="IPR001045">
    <property type="entry name" value="Spermi_synthase"/>
</dbReference>
<dbReference type="InterPro" id="IPR035246">
    <property type="entry name" value="Spermidine_synt_N"/>
</dbReference>
<dbReference type="InterPro" id="IPR037163">
    <property type="entry name" value="Spermidine_synt_N_sf"/>
</dbReference>
<dbReference type="NCBIfam" id="NF002010">
    <property type="entry name" value="PRK00811.1"/>
    <property type="match status" value="1"/>
</dbReference>
<dbReference type="NCBIfam" id="TIGR00417">
    <property type="entry name" value="speE"/>
    <property type="match status" value="1"/>
</dbReference>
<dbReference type="PANTHER" id="PTHR11558:SF11">
    <property type="entry name" value="SPERMIDINE SYNTHASE"/>
    <property type="match status" value="1"/>
</dbReference>
<dbReference type="PANTHER" id="PTHR11558">
    <property type="entry name" value="SPERMIDINE/SPERMINE SYNTHASE"/>
    <property type="match status" value="1"/>
</dbReference>
<dbReference type="Pfam" id="PF17284">
    <property type="entry name" value="Spermine_synt_N"/>
    <property type="match status" value="1"/>
</dbReference>
<dbReference type="Pfam" id="PF01564">
    <property type="entry name" value="Spermine_synth"/>
    <property type="match status" value="1"/>
</dbReference>
<dbReference type="SUPFAM" id="SSF53335">
    <property type="entry name" value="S-adenosyl-L-methionine-dependent methyltransferases"/>
    <property type="match status" value="1"/>
</dbReference>
<dbReference type="PROSITE" id="PS51006">
    <property type="entry name" value="PABS_2"/>
    <property type="match status" value="1"/>
</dbReference>
<gene>
    <name evidence="1" type="primary">speE</name>
    <name type="ordered locus">CPE0550</name>
</gene>
<evidence type="ECO:0000255" key="1">
    <source>
        <dbReference type="HAMAP-Rule" id="MF_00198"/>
    </source>
</evidence>
<reference key="1">
    <citation type="journal article" date="2002" name="Proc. Natl. Acad. Sci. U.S.A.">
        <title>Complete genome sequence of Clostridium perfringens, an anaerobic flesh-eater.</title>
        <authorList>
            <person name="Shimizu T."/>
            <person name="Ohtani K."/>
            <person name="Hirakawa H."/>
            <person name="Ohshima K."/>
            <person name="Yamashita A."/>
            <person name="Shiba T."/>
            <person name="Ogasawara N."/>
            <person name="Hattori M."/>
            <person name="Kuhara S."/>
            <person name="Hayashi H."/>
        </authorList>
    </citation>
    <scope>NUCLEOTIDE SEQUENCE [LARGE SCALE GENOMIC DNA]</scope>
    <source>
        <strain>13 / Type A</strain>
    </source>
</reference>
<accession>Q8XMY8</accession>